<name>Y790_LEVBA</name>
<accession>Q03S89</accession>
<comment type="similarity">
    <text evidence="1">Belongs to the UPF0346 family.</text>
</comment>
<gene>
    <name type="ordered locus">LVIS_0790</name>
</gene>
<keyword id="KW-1185">Reference proteome</keyword>
<organism>
    <name type="scientific">Levilactobacillus brevis (strain ATCC 367 / BCRC 12310 / CIP 105137 / JCM 1170 / LMG 11437 / NCIMB 947 / NCTC 947)</name>
    <name type="common">Lactobacillus brevis</name>
    <dbReference type="NCBI Taxonomy" id="387344"/>
    <lineage>
        <taxon>Bacteria</taxon>
        <taxon>Bacillati</taxon>
        <taxon>Bacillota</taxon>
        <taxon>Bacilli</taxon>
        <taxon>Lactobacillales</taxon>
        <taxon>Lactobacillaceae</taxon>
        <taxon>Levilactobacillus</taxon>
    </lineage>
</organism>
<reference key="1">
    <citation type="journal article" date="2006" name="Proc. Natl. Acad. Sci. U.S.A.">
        <title>Comparative genomics of the lactic acid bacteria.</title>
        <authorList>
            <person name="Makarova K.S."/>
            <person name="Slesarev A."/>
            <person name="Wolf Y.I."/>
            <person name="Sorokin A."/>
            <person name="Mirkin B."/>
            <person name="Koonin E.V."/>
            <person name="Pavlov A."/>
            <person name="Pavlova N."/>
            <person name="Karamychev V."/>
            <person name="Polouchine N."/>
            <person name="Shakhova V."/>
            <person name="Grigoriev I."/>
            <person name="Lou Y."/>
            <person name="Rohksar D."/>
            <person name="Lucas S."/>
            <person name="Huang K."/>
            <person name="Goodstein D.M."/>
            <person name="Hawkins T."/>
            <person name="Plengvidhya V."/>
            <person name="Welker D."/>
            <person name="Hughes J."/>
            <person name="Goh Y."/>
            <person name="Benson A."/>
            <person name="Baldwin K."/>
            <person name="Lee J.-H."/>
            <person name="Diaz-Muniz I."/>
            <person name="Dosti B."/>
            <person name="Smeianov V."/>
            <person name="Wechter W."/>
            <person name="Barabote R."/>
            <person name="Lorca G."/>
            <person name="Altermann E."/>
            <person name="Barrangou R."/>
            <person name="Ganesan B."/>
            <person name="Xie Y."/>
            <person name="Rawsthorne H."/>
            <person name="Tamir D."/>
            <person name="Parker C."/>
            <person name="Breidt F."/>
            <person name="Broadbent J.R."/>
            <person name="Hutkins R."/>
            <person name="O'Sullivan D."/>
            <person name="Steele J."/>
            <person name="Unlu G."/>
            <person name="Saier M.H. Jr."/>
            <person name="Klaenhammer T."/>
            <person name="Richardson P."/>
            <person name="Kozyavkin S."/>
            <person name="Weimer B.C."/>
            <person name="Mills D.A."/>
        </authorList>
    </citation>
    <scope>NUCLEOTIDE SEQUENCE [LARGE SCALE GENOMIC DNA]</scope>
    <source>
        <strain>ATCC 367 / BCRC 12310 / CIP 105137 / JCM 1170 / LMG 11437 / NCIMB 947 / NCTC 947</strain>
    </source>
</reference>
<sequence length="73" mass="8480">MPKTFYEFLMTQRNPESYEPVASFANNAFLDSAFPKQETQFEPLSKYLEENAPYLPSMTIFDDAWQLYLAALA</sequence>
<protein>
    <recommendedName>
        <fullName evidence="1">UPF0346 protein LVIS_0790</fullName>
    </recommendedName>
</protein>
<evidence type="ECO:0000255" key="1">
    <source>
        <dbReference type="HAMAP-Rule" id="MF_01538"/>
    </source>
</evidence>
<dbReference type="EMBL" id="CP000416">
    <property type="protein sequence ID" value="ABJ63933.1"/>
    <property type="molecule type" value="Genomic_DNA"/>
</dbReference>
<dbReference type="RefSeq" id="WP_011667564.1">
    <property type="nucleotide sequence ID" value="NC_008497.1"/>
</dbReference>
<dbReference type="SMR" id="Q03S89"/>
<dbReference type="STRING" id="387344.LVIS_0790"/>
<dbReference type="KEGG" id="lbr:LVIS_0790"/>
<dbReference type="eggNOG" id="COG4479">
    <property type="taxonomic scope" value="Bacteria"/>
</dbReference>
<dbReference type="HOGENOM" id="CLU_177534_1_0_9"/>
<dbReference type="Proteomes" id="UP000001652">
    <property type="component" value="Chromosome"/>
</dbReference>
<dbReference type="Gene3D" id="1.10.150.260">
    <property type="entry name" value="YozE SAM-like"/>
    <property type="match status" value="1"/>
</dbReference>
<dbReference type="HAMAP" id="MF_01538">
    <property type="entry name" value="UPF0346"/>
    <property type="match status" value="1"/>
</dbReference>
<dbReference type="InterPro" id="IPR010673">
    <property type="entry name" value="UPF0346"/>
</dbReference>
<dbReference type="InterPro" id="IPR023089">
    <property type="entry name" value="YozE_SAM-like"/>
</dbReference>
<dbReference type="InterPro" id="IPR036806">
    <property type="entry name" value="YozE_SAM-like_sf"/>
</dbReference>
<dbReference type="NCBIfam" id="NF010193">
    <property type="entry name" value="PRK13672.1"/>
    <property type="match status" value="1"/>
</dbReference>
<dbReference type="Pfam" id="PF06855">
    <property type="entry name" value="YozE_SAM_like"/>
    <property type="match status" value="1"/>
</dbReference>
<dbReference type="PIRSF" id="PIRSF037262">
    <property type="entry name" value="UCP037262"/>
    <property type="match status" value="1"/>
</dbReference>
<dbReference type="SUPFAM" id="SSF140652">
    <property type="entry name" value="YozE-like"/>
    <property type="match status" value="1"/>
</dbReference>
<feature type="chain" id="PRO_0000298739" description="UPF0346 protein LVIS_0790">
    <location>
        <begin position="1"/>
        <end position="73"/>
    </location>
</feature>
<proteinExistence type="inferred from homology"/>